<gene>
    <name evidence="1" type="primary">IMPG1</name>
    <name evidence="10" type="synonym">SPACR</name>
</gene>
<sequence>MHLKTGLIFLAICLALQVQGSREIPSKTNHGEAKQLADASGSDKTERTTKRSRVSTIRRIFDMAKHRTKRSPFFSTGVKICPQESVKQILASHQAYYRLRVCQEAVWEAFRIFLDRIPDTSEYQNWVTACQRETFCIFDIGKNFSNSQEHLEIIQRRVKHRTFQERKDEISTDKTGGKKLEDIPSVSTGPPSASLSTYTLVPNGTLLNEIVNETKTPVKELGTNTVPELPAEQMVEFSVTLTDQEYTAELSDPNSPQYRQLAAKFQLQMQKIFEKLPGFKEIHVLGFKQKKEKDGSSSTIARYMVNFERDGSEIKSTADDISTIGSNKVENEKVPLSAKEEREISATKLTVTDLQQLVATALHEDRSLPVDLGTLRFTDEPIKPSSDFDNDIQGMVTIPLAGPDLDDTISAELPLVYPSPITVDQTRDIFVDEFTTGITDLSREIGGPEDFDSNFITSEPAFPTKPSREPPHDRSPDTEDITTDYQRFTVPFSALVSTDSPAKPEDSYLPPPADESDSNDLITDESPTEQVITPAVYTTGSFTLPTFLQATDKDTEAEMKKELVGVTEPLFKEADRDSLSGQAVKMMDELESSGDDILVTTSTYKTLPFLIGSSDLFATQPEVTFAAALPPDQTLLPTVTSPFYSHSVVIDQSPEVPDTLMPAAASALPDRASTGVQDIAAELDGAGVKSTAVLDEAEHGSGYISVQTTEPAEVTQAPTLKYVTTSSMTTAAKGKELVVFFSLRVTNMHFSDDLFNRSSQEYKALEQQFMQLLLPYLQSNLTGFKQLEILNFRNGSVIVNSKMKFARTVPYNITEAVHCVLEDFCDAAAQHLNLEIDSYSLDIEPADQADPCKFMACDEFSKCIMNEWTKEADCLCKPGYASQDGLPCRSLCEMEPHLCDNGGKCELVPGRGAVCRSPDQFTEPGLTS</sequence>
<comment type="function">
    <text evidence="1 6 7 8">Chondroitin sulfate-, heparin- and hyaluronan-binding protein (PubMed:11991949, PubMed:18466325, PubMed:18786170). May serve to form a basic macromolecular scaffold comprising the insoluble interphotoreceptor matrix (By similarity).</text>
</comment>
<comment type="subcellular location">
    <subcellularLocation>
        <location evidence="1">Cell projection</location>
        <location evidence="1">Cilium</location>
        <location evidence="1">Photoreceptor outer segment</location>
    </subcellularLocation>
    <subcellularLocation>
        <location evidence="6">Secreted</location>
        <location evidence="6">Extracellular space</location>
        <location evidence="6">Extracellular matrix</location>
        <location evidence="6">Interphotoreceptor matrix</location>
    </subcellularLocation>
    <subcellularLocation>
        <location evidence="2">Photoreceptor inner segment</location>
    </subcellularLocation>
</comment>
<comment type="tissue specificity">
    <text evidence="6 7 8">Abundantly expressed in the retina (at protein level) (PubMed:11991949, PubMed:18466325, PubMed:18786170). Localizes to the photoreceptor layer of the interphotoreceptor matrix of the retina (at protein level) (PubMed:11991949).</text>
</comment>
<comment type="developmental stage">
    <text evidence="6">Expression is first detected in embryonic retina at 15 dpc and increases with developmental age.</text>
</comment>
<comment type="PTM">
    <text evidence="6">Highly glycosylated (N- and O-linked carbohydrates and sialic acid).</text>
</comment>
<keyword id="KW-0966">Cell projection</keyword>
<keyword id="KW-0272">Extracellular matrix</keyword>
<keyword id="KW-0325">Glycoprotein</keyword>
<keyword id="KW-0358">Heparin-binding</keyword>
<keyword id="KW-0373">Hyaluronic acid</keyword>
<keyword id="KW-0675">Receptor</keyword>
<keyword id="KW-1185">Reference proteome</keyword>
<keyword id="KW-0677">Repeat</keyword>
<keyword id="KW-0964">Secreted</keyword>
<keyword id="KW-0730">Sialic acid</keyword>
<keyword id="KW-0732">Signal</keyword>
<accession>Q8JIR8</accession>
<feature type="signal peptide" evidence="3">
    <location>
        <begin position="1"/>
        <end position="20"/>
    </location>
</feature>
<feature type="chain" id="PRO_0000252241" description="Interphotoreceptor matrix proteoglycan 1" evidence="3">
    <location>
        <begin position="21"/>
        <end position="928"/>
    </location>
</feature>
<feature type="domain" description="SEA 1" evidence="4">
    <location>
        <begin position="231"/>
        <end position="356"/>
    </location>
</feature>
<feature type="domain" description="SEA 2" evidence="4">
    <location>
        <begin position="735"/>
        <end position="848"/>
    </location>
</feature>
<feature type="region of interest" description="Disordered" evidence="5">
    <location>
        <begin position="26"/>
        <end position="50"/>
    </location>
</feature>
<feature type="region of interest" description="Disordered" evidence="5">
    <location>
        <begin position="164"/>
        <end position="191"/>
    </location>
</feature>
<feature type="region of interest" description="Disordered" evidence="5">
    <location>
        <begin position="441"/>
        <end position="481"/>
    </location>
</feature>
<feature type="region of interest" description="Disordered" evidence="5">
    <location>
        <begin position="494"/>
        <end position="522"/>
    </location>
</feature>
<feature type="short sequence motif" description="Heparin- and hyaluronan-binding" evidence="7 8">
    <location>
        <begin position="785"/>
        <end position="793"/>
    </location>
</feature>
<feature type="compositionally biased region" description="Basic and acidic residues" evidence="5">
    <location>
        <begin position="29"/>
        <end position="49"/>
    </location>
</feature>
<feature type="compositionally biased region" description="Basic and acidic residues" evidence="5">
    <location>
        <begin position="164"/>
        <end position="182"/>
    </location>
</feature>
<feature type="compositionally biased region" description="Basic and acidic residues" evidence="5">
    <location>
        <begin position="466"/>
        <end position="477"/>
    </location>
</feature>
<feature type="glycosylation site" description="N-linked (GlcNAc...) asparagine" evidence="3">
    <location>
        <position position="143"/>
    </location>
</feature>
<feature type="glycosylation site" description="N-linked (GlcNAc...) asparagine" evidence="3">
    <location>
        <position position="203"/>
    </location>
</feature>
<feature type="glycosylation site" description="N-linked (GlcNAc...) asparagine" evidence="3">
    <location>
        <position position="212"/>
    </location>
</feature>
<feature type="glycosylation site" description="N-linked (GlcNAc...) asparagine" evidence="3">
    <location>
        <position position="756"/>
    </location>
</feature>
<feature type="glycosylation site" description="N-linked (GlcNAc...) asparagine" evidence="3">
    <location>
        <position position="780"/>
    </location>
</feature>
<feature type="glycosylation site" description="N-linked (GlcNAc...) asparagine" evidence="3">
    <location>
        <position position="794"/>
    </location>
</feature>
<feature type="glycosylation site" description="N-linked (GlcNAc...) asparagine" evidence="3">
    <location>
        <position position="812"/>
    </location>
</feature>
<feature type="mutagenesis site" description="Increases binding of hyaluronan and heparin." evidence="7 8">
    <original>L</original>
    <variation>R</variation>
    <location>
        <position position="777"/>
    </location>
</feature>
<feature type="mutagenesis site" description="Reduces binding of hyaluronan and heparin." evidence="7 8">
    <original>K</original>
    <variation>N</variation>
    <location>
        <position position="785"/>
    </location>
</feature>
<feature type="mutagenesis site" description="No effect on binding of hyaluronan or heparin." evidence="7 8">
    <original>Q</original>
    <variation>T</variation>
    <location>
        <position position="786"/>
    </location>
</feature>
<feature type="mutagenesis site" description="Increases binding of hyaluronan and heparin." evidence="7 8">
    <original>E</original>
    <variation>V</variation>
    <location>
        <position position="788"/>
    </location>
</feature>
<feature type="mutagenesis site" description="Reduces binding of hyaluronan and heparin." evidence="7 8">
    <original>R</original>
    <variation>S</variation>
    <location>
        <position position="793"/>
    </location>
</feature>
<reference evidence="9 10" key="1">
    <citation type="journal article" date="2002" name="J. Biol. Chem.">
        <title>Molecular cloning and characterization of chick sialoprotein associated with cones and rods, a developmentally regulated glycoprotein of interphotoreceptor matrix.</title>
        <authorList>
            <person name="Zako M."/>
            <person name="Iwaki M."/>
            <person name="Yoneda M."/>
            <person name="Miyaishi O."/>
            <person name="Zhao J."/>
            <person name="Suzuki Y."/>
            <person name="Takeuchi M."/>
            <person name="Miyake G."/>
            <person name="Ikagawa H."/>
            <person name="Kimata K."/>
        </authorList>
    </citation>
    <scope>NUCLEOTIDE SEQUENCE [MRNA]</scope>
    <scope>FUNCTION</scope>
    <scope>SUBCELLULAR LOCATION</scope>
    <scope>TISSUE SPECIFICITY</scope>
    <scope>DEVELOPMENTAL STAGE</scope>
    <scope>GLYCOSYLATION</scope>
    <source>
        <tissue evidence="10">Retina</tissue>
    </source>
</reference>
<reference key="2">
    <citation type="journal article" date="2008" name="J. Neurochem.">
        <title>Characterization of a motif for specific binding to hyaluronan in chicken SPACR.</title>
        <authorList>
            <person name="Zhao J."/>
            <person name="Yoneda M."/>
            <person name="Takeyama M."/>
            <person name="Miyaishi O."/>
            <person name="Inoue Y."/>
            <person name="Kataoka T."/>
            <person name="Ohno-Jinno A."/>
            <person name="Isogai Z."/>
            <person name="Kimata K."/>
            <person name="Iwaki M."/>
            <person name="Zako M."/>
        </authorList>
    </citation>
    <scope>FUNCTION</scope>
    <scope>TISSUE SPECIFICITY</scope>
    <scope>MUTAGENESIS OF LEU-777; LYS-785; GLN-786; GLU-788 AND ARG-793</scope>
</reference>
<reference key="3">
    <citation type="journal article" date="2008" name="J. Neurochem.">
        <title>Competitive binding of heparin with hyaluronan to a specific motif in SPACR.</title>
        <authorList>
            <person name="Zhao J."/>
            <person name="Yoneda M."/>
            <person name="Takeyama M."/>
            <person name="Inoue Y."/>
            <person name="Kataoka T."/>
            <person name="Ohno-Jinno A."/>
            <person name="Isogai Z."/>
            <person name="Iwaki M."/>
            <person name="Zako M."/>
        </authorList>
    </citation>
    <scope>FUNCTION</scope>
    <scope>TISSUE SPECIFICITY</scope>
    <scope>MUTAGENESIS OF LEU-777; LYS-785; GLN-786; GLU-788 AND ARG-793</scope>
</reference>
<protein>
    <recommendedName>
        <fullName>Interphotoreceptor matrix proteoglycan 1</fullName>
    </recommendedName>
    <alternativeName>
        <fullName>Sialoprotein associated with cones and rods</fullName>
        <shortName>SPACR</shortName>
    </alternativeName>
</protein>
<name>IMPG1_CHICK</name>
<dbReference type="EMBL" id="AB070714">
    <property type="protein sequence ID" value="BAC00947.1"/>
    <property type="molecule type" value="mRNA"/>
</dbReference>
<dbReference type="RefSeq" id="NP_989572.1">
    <property type="nucleotide sequence ID" value="NM_204241.1"/>
</dbReference>
<dbReference type="SMR" id="Q8JIR8"/>
<dbReference type="FunCoup" id="Q8JIR8">
    <property type="interactions" value="39"/>
</dbReference>
<dbReference type="STRING" id="9031.ENSGALP00000025572"/>
<dbReference type="GlyCosmos" id="Q8JIR8">
    <property type="glycosylation" value="7 sites, No reported glycans"/>
</dbReference>
<dbReference type="GlyGen" id="Q8JIR8">
    <property type="glycosylation" value="7 sites"/>
</dbReference>
<dbReference type="PaxDb" id="9031-ENSGALP00000025572"/>
<dbReference type="GeneID" id="374088"/>
<dbReference type="KEGG" id="gga:374088"/>
<dbReference type="CTD" id="3617"/>
<dbReference type="VEuPathDB" id="HostDB:geneid_374088"/>
<dbReference type="eggNOG" id="ENOG502QTXX">
    <property type="taxonomic scope" value="Eukaryota"/>
</dbReference>
<dbReference type="HOGENOM" id="CLU_005111_1_0_1"/>
<dbReference type="InParanoid" id="Q8JIR8"/>
<dbReference type="OrthoDB" id="9908153at2759"/>
<dbReference type="PhylomeDB" id="Q8JIR8"/>
<dbReference type="PRO" id="PR:Q8JIR8"/>
<dbReference type="Proteomes" id="UP000000539">
    <property type="component" value="Chromosome 3"/>
</dbReference>
<dbReference type="GO" id="GO:0005576">
    <property type="term" value="C:extracellular region"/>
    <property type="evidence" value="ECO:0007669"/>
    <property type="project" value="UniProtKB-KW"/>
</dbReference>
<dbReference type="GO" id="GO:0033165">
    <property type="term" value="C:interphotoreceptor matrix"/>
    <property type="evidence" value="ECO:0007669"/>
    <property type="project" value="UniProtKB-SubCell"/>
</dbReference>
<dbReference type="GO" id="GO:0001917">
    <property type="term" value="C:photoreceptor inner segment"/>
    <property type="evidence" value="ECO:0007669"/>
    <property type="project" value="UniProtKB-SubCell"/>
</dbReference>
<dbReference type="GO" id="GO:0001750">
    <property type="term" value="C:photoreceptor outer segment"/>
    <property type="evidence" value="ECO:0007669"/>
    <property type="project" value="UniProtKB-SubCell"/>
</dbReference>
<dbReference type="GO" id="GO:0035374">
    <property type="term" value="F:chondroitin sulfate binding"/>
    <property type="evidence" value="ECO:0000314"/>
    <property type="project" value="UniProtKB"/>
</dbReference>
<dbReference type="GO" id="GO:0008201">
    <property type="term" value="F:heparin binding"/>
    <property type="evidence" value="ECO:0000314"/>
    <property type="project" value="UniProtKB"/>
</dbReference>
<dbReference type="GO" id="GO:0005540">
    <property type="term" value="F:hyaluronic acid binding"/>
    <property type="evidence" value="ECO:0000314"/>
    <property type="project" value="UniProtKB"/>
</dbReference>
<dbReference type="GO" id="GO:0007601">
    <property type="term" value="P:visual perception"/>
    <property type="evidence" value="ECO:0007669"/>
    <property type="project" value="InterPro"/>
</dbReference>
<dbReference type="Gene3D" id="3.30.70.960">
    <property type="entry name" value="SEA domain"/>
    <property type="match status" value="2"/>
</dbReference>
<dbReference type="InterPro" id="IPR039861">
    <property type="entry name" value="IMPG"/>
</dbReference>
<dbReference type="InterPro" id="IPR000082">
    <property type="entry name" value="SEA_dom"/>
</dbReference>
<dbReference type="InterPro" id="IPR036364">
    <property type="entry name" value="SEA_dom_sf"/>
</dbReference>
<dbReference type="PANTHER" id="PTHR12199">
    <property type="entry name" value="INTERPHOTORECEPTOR MATRIX PROTEOGLYCAN"/>
    <property type="match status" value="1"/>
</dbReference>
<dbReference type="PANTHER" id="PTHR12199:SF3">
    <property type="entry name" value="INTERPHOTORECEPTOR MATRIX PROTEOGLYCAN 1"/>
    <property type="match status" value="1"/>
</dbReference>
<dbReference type="Pfam" id="PF01390">
    <property type="entry name" value="SEA"/>
    <property type="match status" value="2"/>
</dbReference>
<dbReference type="SMART" id="SM00200">
    <property type="entry name" value="SEA"/>
    <property type="match status" value="2"/>
</dbReference>
<dbReference type="SUPFAM" id="SSF82671">
    <property type="entry name" value="SEA domain"/>
    <property type="match status" value="2"/>
</dbReference>
<dbReference type="PROSITE" id="PS50024">
    <property type="entry name" value="SEA"/>
    <property type="match status" value="2"/>
</dbReference>
<proteinExistence type="evidence at protein level"/>
<evidence type="ECO:0000250" key="1">
    <source>
        <dbReference type="UniProtKB" id="Q17R60"/>
    </source>
</evidence>
<evidence type="ECO:0000250" key="2">
    <source>
        <dbReference type="UniProtKB" id="Q8R1W8"/>
    </source>
</evidence>
<evidence type="ECO:0000255" key="3"/>
<evidence type="ECO:0000255" key="4">
    <source>
        <dbReference type="PROSITE-ProRule" id="PRU00188"/>
    </source>
</evidence>
<evidence type="ECO:0000256" key="5">
    <source>
        <dbReference type="SAM" id="MobiDB-lite"/>
    </source>
</evidence>
<evidence type="ECO:0000269" key="6">
    <source>
    </source>
</evidence>
<evidence type="ECO:0000269" key="7">
    <source>
    </source>
</evidence>
<evidence type="ECO:0000269" key="8">
    <source>
    </source>
</evidence>
<evidence type="ECO:0000305" key="9"/>
<evidence type="ECO:0000312" key="10">
    <source>
        <dbReference type="EMBL" id="BAC00947.1"/>
    </source>
</evidence>
<organism>
    <name type="scientific">Gallus gallus</name>
    <name type="common">Chicken</name>
    <dbReference type="NCBI Taxonomy" id="9031"/>
    <lineage>
        <taxon>Eukaryota</taxon>
        <taxon>Metazoa</taxon>
        <taxon>Chordata</taxon>
        <taxon>Craniata</taxon>
        <taxon>Vertebrata</taxon>
        <taxon>Euteleostomi</taxon>
        <taxon>Archelosauria</taxon>
        <taxon>Archosauria</taxon>
        <taxon>Dinosauria</taxon>
        <taxon>Saurischia</taxon>
        <taxon>Theropoda</taxon>
        <taxon>Coelurosauria</taxon>
        <taxon>Aves</taxon>
        <taxon>Neognathae</taxon>
        <taxon>Galloanserae</taxon>
        <taxon>Galliformes</taxon>
        <taxon>Phasianidae</taxon>
        <taxon>Phasianinae</taxon>
        <taxon>Gallus</taxon>
    </lineage>
</organism>